<dbReference type="EMBL" id="DS027060">
    <property type="protein sequence ID" value="EAW06652.1"/>
    <property type="molecule type" value="Genomic_DNA"/>
</dbReference>
<dbReference type="RefSeq" id="XP_001268078.1">
    <property type="nucleotide sequence ID" value="XM_001268077.1"/>
</dbReference>
<dbReference type="SMR" id="A1CTL5"/>
<dbReference type="STRING" id="344612.A1CTL5"/>
<dbReference type="EnsemblFungi" id="EAW06652">
    <property type="protein sequence ID" value="EAW06652"/>
    <property type="gene ID" value="ACLA_083470"/>
</dbReference>
<dbReference type="GeneID" id="4700574"/>
<dbReference type="KEGG" id="act:ACLA_083470"/>
<dbReference type="VEuPathDB" id="FungiDB:ACLA_083470"/>
<dbReference type="eggNOG" id="KOG4039">
    <property type="taxonomic scope" value="Eukaryota"/>
</dbReference>
<dbReference type="HOGENOM" id="CLU_071330_3_0_1"/>
<dbReference type="OMA" id="DWPQLTI"/>
<dbReference type="OrthoDB" id="430436at2759"/>
<dbReference type="Proteomes" id="UP000006701">
    <property type="component" value="Unassembled WGS sequence"/>
</dbReference>
<dbReference type="GO" id="GO:0005741">
    <property type="term" value="C:mitochondrial outer membrane"/>
    <property type="evidence" value="ECO:0007669"/>
    <property type="project" value="UniProtKB-SubCell"/>
</dbReference>
<dbReference type="GO" id="GO:0051170">
    <property type="term" value="P:import into nucleus"/>
    <property type="evidence" value="ECO:0007669"/>
    <property type="project" value="TreeGrafter"/>
</dbReference>
<dbReference type="FunFam" id="3.40.50.720:FF:000366">
    <property type="entry name" value="Protein FMP52, mitochondrial"/>
    <property type="match status" value="1"/>
</dbReference>
<dbReference type="Gene3D" id="3.40.50.720">
    <property type="entry name" value="NAD(P)-binding Rossmann-like Domain"/>
    <property type="match status" value="1"/>
</dbReference>
<dbReference type="InterPro" id="IPR016040">
    <property type="entry name" value="NAD(P)-bd_dom"/>
</dbReference>
<dbReference type="InterPro" id="IPR036291">
    <property type="entry name" value="NAD(P)-bd_dom_sf"/>
</dbReference>
<dbReference type="PANTHER" id="PTHR14097">
    <property type="entry name" value="OXIDOREDUCTASE HTATIP2"/>
    <property type="match status" value="1"/>
</dbReference>
<dbReference type="PANTHER" id="PTHR14097:SF7">
    <property type="entry name" value="OXIDOREDUCTASE HTATIP2"/>
    <property type="match status" value="1"/>
</dbReference>
<dbReference type="Pfam" id="PF13460">
    <property type="entry name" value="NAD_binding_10"/>
    <property type="match status" value="1"/>
</dbReference>
<dbReference type="SUPFAM" id="SSF51735">
    <property type="entry name" value="NAD(P)-binding Rossmann-fold domains"/>
    <property type="match status" value="1"/>
</dbReference>
<evidence type="ECO:0000250" key="1"/>
<evidence type="ECO:0000305" key="2"/>
<keyword id="KW-0472">Membrane</keyword>
<keyword id="KW-0496">Mitochondrion</keyword>
<keyword id="KW-1000">Mitochondrion outer membrane</keyword>
<keyword id="KW-1185">Reference proteome</keyword>
<keyword id="KW-0809">Transit peptide</keyword>
<proteinExistence type="inferred from homology"/>
<sequence length="234" mass="24433">MANVALIGATGMVGGHILSTLLESPAVARVDTISRKTPPAAASAPQAKLTTFVSDDTSRWASQLSALTPTPSIFMSAFGTTRAAAGGFDNQYKVEHGLNVEMARAARDAGTKVYVLISSSGASKTSSFAYPRMKGEIEDDVKALGFERTVILRPGLISGQREESRPAEAAVRFIAGFAGKIYSGLKDGWAQDADVIARAAVNAGLKALEGDVPAGSEKVWVLTGSDIIRFGGKN</sequence>
<protein>
    <recommendedName>
        <fullName>Protein fmp52, mitochondrial</fullName>
    </recommendedName>
</protein>
<gene>
    <name type="primary">fmp52</name>
    <name type="ORF">ACLA_083470</name>
</gene>
<feature type="transit peptide" description="Mitochondrion">
    <location>
        <begin position="1"/>
        <end position="28"/>
    </location>
</feature>
<feature type="chain" id="PRO_0000301811" description="Protein fmp52, mitochondrial">
    <location>
        <begin position="29"/>
        <end position="234"/>
    </location>
</feature>
<name>FMP52_ASPCL</name>
<organism>
    <name type="scientific">Aspergillus clavatus (strain ATCC 1007 / CBS 513.65 / DSM 816 / NCTC 3887 / NRRL 1 / QM 1276 / 107)</name>
    <dbReference type="NCBI Taxonomy" id="344612"/>
    <lineage>
        <taxon>Eukaryota</taxon>
        <taxon>Fungi</taxon>
        <taxon>Dikarya</taxon>
        <taxon>Ascomycota</taxon>
        <taxon>Pezizomycotina</taxon>
        <taxon>Eurotiomycetes</taxon>
        <taxon>Eurotiomycetidae</taxon>
        <taxon>Eurotiales</taxon>
        <taxon>Aspergillaceae</taxon>
        <taxon>Aspergillus</taxon>
        <taxon>Aspergillus subgen. Fumigati</taxon>
    </lineage>
</organism>
<reference key="1">
    <citation type="journal article" date="2008" name="PLoS Genet.">
        <title>Genomic islands in the pathogenic filamentous fungus Aspergillus fumigatus.</title>
        <authorList>
            <person name="Fedorova N.D."/>
            <person name="Khaldi N."/>
            <person name="Joardar V.S."/>
            <person name="Maiti R."/>
            <person name="Amedeo P."/>
            <person name="Anderson M.J."/>
            <person name="Crabtree J."/>
            <person name="Silva J.C."/>
            <person name="Badger J.H."/>
            <person name="Albarraq A."/>
            <person name="Angiuoli S."/>
            <person name="Bussey H."/>
            <person name="Bowyer P."/>
            <person name="Cotty P.J."/>
            <person name="Dyer P.S."/>
            <person name="Egan A."/>
            <person name="Galens K."/>
            <person name="Fraser-Liggett C.M."/>
            <person name="Haas B.J."/>
            <person name="Inman J.M."/>
            <person name="Kent R."/>
            <person name="Lemieux S."/>
            <person name="Malavazi I."/>
            <person name="Orvis J."/>
            <person name="Roemer T."/>
            <person name="Ronning C.M."/>
            <person name="Sundaram J.P."/>
            <person name="Sutton G."/>
            <person name="Turner G."/>
            <person name="Venter J.C."/>
            <person name="White O.R."/>
            <person name="Whitty B.R."/>
            <person name="Youngman P."/>
            <person name="Wolfe K.H."/>
            <person name="Goldman G.H."/>
            <person name="Wortman J.R."/>
            <person name="Jiang B."/>
            <person name="Denning D.W."/>
            <person name="Nierman W.C."/>
        </authorList>
    </citation>
    <scope>NUCLEOTIDE SEQUENCE [LARGE SCALE GENOMIC DNA]</scope>
    <source>
        <strain>ATCC 1007 / CBS 513.65 / DSM 816 / NCTC 3887 / NRRL 1 / QM 1276 / 107</strain>
    </source>
</reference>
<accession>A1CTL5</accession>
<comment type="subcellular location">
    <subcellularLocation>
        <location evidence="1">Mitochondrion outer membrane</location>
        <topology evidence="1">Peripheral membrane protein</topology>
    </subcellularLocation>
</comment>
<comment type="similarity">
    <text evidence="2">Belongs to the FMP52 family.</text>
</comment>